<evidence type="ECO:0000255" key="1">
    <source>
        <dbReference type="HAMAP-Rule" id="MF_00672"/>
    </source>
</evidence>
<name>Y4364_PSEA8</name>
<sequence>MREHFNDGVEFARFLAHRFVTDKAPNSAAALTYTTLFAVVPMMTVMFSMLSLIPAFHGMGESIQTFIFRNFVPSAGEAVETYLKSFTTQARHLTWVGVVFLAVTAFTMLVTIEKAFNEIWRVRQPRRGVGRFLLYWAILSLGPLLLGAGFAVTTYITSLSLLHGPDALPGAETLLGLMPLAFSVAAFTLLYSAVPNARVPVRHALMGGVFTAVLFEAAKTLFGLYVSLFPGYQLIYGAFATVPIFLLWIYLSWMIVLFGAVLVCNLSSSRLWRRRSLPKLIVLLGVLRVFHQRQQLGQSLRLTHLHRAGWLLPEDEWEELLDFLEKEQFVCRAGGGEWVLCRDLGAYSLHRLLNRCPWPMPSRERMPASLDEAWYPPFQQAMERLQVEQEALFGESLAHWLADGTSGAKVT</sequence>
<organism>
    <name type="scientific">Pseudomonas aeruginosa (strain LESB58)</name>
    <dbReference type="NCBI Taxonomy" id="557722"/>
    <lineage>
        <taxon>Bacteria</taxon>
        <taxon>Pseudomonadati</taxon>
        <taxon>Pseudomonadota</taxon>
        <taxon>Gammaproteobacteria</taxon>
        <taxon>Pseudomonadales</taxon>
        <taxon>Pseudomonadaceae</taxon>
        <taxon>Pseudomonas</taxon>
    </lineage>
</organism>
<accession>B7UXY2</accession>
<comment type="subcellular location">
    <subcellularLocation>
        <location evidence="1">Cell inner membrane</location>
        <topology evidence="1">Multi-pass membrane protein</topology>
    </subcellularLocation>
</comment>
<comment type="similarity">
    <text evidence="1">Belongs to the UPF0761 family.</text>
</comment>
<proteinExistence type="inferred from homology"/>
<reference key="1">
    <citation type="journal article" date="2009" name="Genome Res.">
        <title>Newly introduced genomic prophage islands are critical determinants of in vivo competitiveness in the Liverpool epidemic strain of Pseudomonas aeruginosa.</title>
        <authorList>
            <person name="Winstanley C."/>
            <person name="Langille M.G.I."/>
            <person name="Fothergill J.L."/>
            <person name="Kukavica-Ibrulj I."/>
            <person name="Paradis-Bleau C."/>
            <person name="Sanschagrin F."/>
            <person name="Thomson N.R."/>
            <person name="Winsor G.L."/>
            <person name="Quail M.A."/>
            <person name="Lennard N."/>
            <person name="Bignell A."/>
            <person name="Clarke L."/>
            <person name="Seeger K."/>
            <person name="Saunders D."/>
            <person name="Harris D."/>
            <person name="Parkhill J."/>
            <person name="Hancock R.E.W."/>
            <person name="Brinkman F.S.L."/>
            <person name="Levesque R.C."/>
        </authorList>
    </citation>
    <scope>NUCLEOTIDE SEQUENCE [LARGE SCALE GENOMIC DNA]</scope>
    <source>
        <strain>LESB58</strain>
    </source>
</reference>
<protein>
    <recommendedName>
        <fullName evidence="1">UPF0761 membrane protein PLES_43641</fullName>
    </recommendedName>
</protein>
<gene>
    <name type="ordered locus">PLES_43641</name>
</gene>
<keyword id="KW-0997">Cell inner membrane</keyword>
<keyword id="KW-1003">Cell membrane</keyword>
<keyword id="KW-0472">Membrane</keyword>
<keyword id="KW-0812">Transmembrane</keyword>
<keyword id="KW-1133">Transmembrane helix</keyword>
<dbReference type="EMBL" id="FM209186">
    <property type="protein sequence ID" value="CAW29119.1"/>
    <property type="molecule type" value="Genomic_DNA"/>
</dbReference>
<dbReference type="RefSeq" id="WP_012614425.1">
    <property type="nucleotide sequence ID" value="NC_011770.1"/>
</dbReference>
<dbReference type="SMR" id="B7UXY2"/>
<dbReference type="KEGG" id="pag:PLES_43641"/>
<dbReference type="HOGENOM" id="CLU_032288_1_0_6"/>
<dbReference type="GO" id="GO:0005886">
    <property type="term" value="C:plasma membrane"/>
    <property type="evidence" value="ECO:0007669"/>
    <property type="project" value="UniProtKB-SubCell"/>
</dbReference>
<dbReference type="HAMAP" id="MF_00672">
    <property type="entry name" value="UPF0761"/>
    <property type="match status" value="1"/>
</dbReference>
<dbReference type="InterPro" id="IPR023679">
    <property type="entry name" value="UPF0761_bac"/>
</dbReference>
<dbReference type="InterPro" id="IPR017039">
    <property type="entry name" value="Virul_fac_BrkB"/>
</dbReference>
<dbReference type="NCBIfam" id="TIGR00765">
    <property type="entry name" value="yihY_not_rbn"/>
    <property type="match status" value="1"/>
</dbReference>
<dbReference type="PANTHER" id="PTHR30213">
    <property type="entry name" value="INNER MEMBRANE PROTEIN YHJD"/>
    <property type="match status" value="1"/>
</dbReference>
<dbReference type="PANTHER" id="PTHR30213:SF0">
    <property type="entry name" value="UPF0761 MEMBRANE PROTEIN YIHY"/>
    <property type="match status" value="1"/>
</dbReference>
<dbReference type="Pfam" id="PF03631">
    <property type="entry name" value="Virul_fac_BrkB"/>
    <property type="match status" value="1"/>
</dbReference>
<feature type="chain" id="PRO_1000131557" description="UPF0761 membrane protein PLES_43641">
    <location>
        <begin position="1"/>
        <end position="411"/>
    </location>
</feature>
<feature type="transmembrane region" description="Helical" evidence="1">
    <location>
        <begin position="36"/>
        <end position="56"/>
    </location>
</feature>
<feature type="transmembrane region" description="Helical" evidence="1">
    <location>
        <begin position="92"/>
        <end position="112"/>
    </location>
</feature>
<feature type="transmembrane region" description="Helical" evidence="1">
    <location>
        <begin position="132"/>
        <end position="152"/>
    </location>
</feature>
<feature type="transmembrane region" description="Helical" evidence="1">
    <location>
        <begin position="174"/>
        <end position="194"/>
    </location>
</feature>
<feature type="transmembrane region" description="Helical" evidence="1">
    <location>
        <begin position="207"/>
        <end position="229"/>
    </location>
</feature>
<feature type="transmembrane region" description="Helical" evidence="1">
    <location>
        <begin position="244"/>
        <end position="264"/>
    </location>
</feature>